<feature type="chain" id="PRO_1000007545" description="Large ribosomal subunit protein uL29">
    <location>
        <begin position="1"/>
        <end position="65"/>
    </location>
</feature>
<organism>
    <name type="scientific">Parabacteroides distasonis (strain ATCC 8503 / DSM 20701 / CIP 104284 / JCM 5825 / NCTC 11152)</name>
    <dbReference type="NCBI Taxonomy" id="435591"/>
    <lineage>
        <taxon>Bacteria</taxon>
        <taxon>Pseudomonadati</taxon>
        <taxon>Bacteroidota</taxon>
        <taxon>Bacteroidia</taxon>
        <taxon>Bacteroidales</taxon>
        <taxon>Tannerellaceae</taxon>
        <taxon>Parabacteroides</taxon>
    </lineage>
</organism>
<proteinExistence type="inferred from homology"/>
<evidence type="ECO:0000255" key="1">
    <source>
        <dbReference type="HAMAP-Rule" id="MF_00374"/>
    </source>
</evidence>
<evidence type="ECO:0000305" key="2"/>
<protein>
    <recommendedName>
        <fullName evidence="1">Large ribosomal subunit protein uL29</fullName>
    </recommendedName>
    <alternativeName>
        <fullName evidence="2">50S ribosomal protein L29</fullName>
    </alternativeName>
</protein>
<comment type="similarity">
    <text evidence="1">Belongs to the universal ribosomal protein uL29 family.</text>
</comment>
<reference key="1">
    <citation type="journal article" date="2007" name="PLoS Biol.">
        <title>Evolution of symbiotic bacteria in the distal human intestine.</title>
        <authorList>
            <person name="Xu J."/>
            <person name="Mahowald M.A."/>
            <person name="Ley R.E."/>
            <person name="Lozupone C.A."/>
            <person name="Hamady M."/>
            <person name="Martens E.C."/>
            <person name="Henrissat B."/>
            <person name="Coutinho P.M."/>
            <person name="Minx P."/>
            <person name="Latreille P."/>
            <person name="Cordum H."/>
            <person name="Van Brunt A."/>
            <person name="Kim K."/>
            <person name="Fulton R.S."/>
            <person name="Fulton L.A."/>
            <person name="Clifton S.W."/>
            <person name="Wilson R.K."/>
            <person name="Knight R.D."/>
            <person name="Gordon J.I."/>
        </authorList>
    </citation>
    <scope>NUCLEOTIDE SEQUENCE [LARGE SCALE GENOMIC DNA]</scope>
    <source>
        <strain>ATCC 8503 / DSM 20701 / CIP 104284 / JCM 5825 / NCTC 11152</strain>
    </source>
</reference>
<gene>
    <name evidence="1" type="primary">rpmC</name>
    <name type="ordered locus">BDI_2372</name>
</gene>
<name>RL29_PARD8</name>
<sequence length="65" mass="7705">MKIAEIRELSTKELLERVDAEVAAYDQKKINHSISPMDNPSQIKQQRRLIARMKTELRQRELNNK</sequence>
<keyword id="KW-1185">Reference proteome</keyword>
<keyword id="KW-0687">Ribonucleoprotein</keyword>
<keyword id="KW-0689">Ribosomal protein</keyword>
<dbReference type="EMBL" id="CP000140">
    <property type="protein sequence ID" value="ABR44097.1"/>
    <property type="molecule type" value="Genomic_DNA"/>
</dbReference>
<dbReference type="RefSeq" id="WP_005853979.1">
    <property type="nucleotide sequence ID" value="NZ_LR215978.1"/>
</dbReference>
<dbReference type="SMR" id="A6LEI3"/>
<dbReference type="STRING" id="435591.BDI_2372"/>
<dbReference type="PaxDb" id="435591-BDI_2372"/>
<dbReference type="GeneID" id="93522365"/>
<dbReference type="KEGG" id="pdi:BDI_2372"/>
<dbReference type="eggNOG" id="COG0255">
    <property type="taxonomic scope" value="Bacteria"/>
</dbReference>
<dbReference type="HOGENOM" id="CLU_158491_5_1_10"/>
<dbReference type="BioCyc" id="PDIS435591:G1G5A-2437-MONOMER"/>
<dbReference type="Proteomes" id="UP000000566">
    <property type="component" value="Chromosome"/>
</dbReference>
<dbReference type="GO" id="GO:1990904">
    <property type="term" value="C:ribonucleoprotein complex"/>
    <property type="evidence" value="ECO:0007669"/>
    <property type="project" value="UniProtKB-KW"/>
</dbReference>
<dbReference type="GO" id="GO:0005840">
    <property type="term" value="C:ribosome"/>
    <property type="evidence" value="ECO:0007669"/>
    <property type="project" value="UniProtKB-KW"/>
</dbReference>
<dbReference type="GO" id="GO:0003735">
    <property type="term" value="F:structural constituent of ribosome"/>
    <property type="evidence" value="ECO:0007669"/>
    <property type="project" value="InterPro"/>
</dbReference>
<dbReference type="GO" id="GO:0006412">
    <property type="term" value="P:translation"/>
    <property type="evidence" value="ECO:0007669"/>
    <property type="project" value="UniProtKB-UniRule"/>
</dbReference>
<dbReference type="Gene3D" id="1.10.287.310">
    <property type="match status" value="1"/>
</dbReference>
<dbReference type="HAMAP" id="MF_00374">
    <property type="entry name" value="Ribosomal_uL29"/>
    <property type="match status" value="1"/>
</dbReference>
<dbReference type="InterPro" id="IPR001854">
    <property type="entry name" value="Ribosomal_uL29"/>
</dbReference>
<dbReference type="InterPro" id="IPR036049">
    <property type="entry name" value="Ribosomal_uL29_sf"/>
</dbReference>
<dbReference type="NCBIfam" id="TIGR00012">
    <property type="entry name" value="L29"/>
    <property type="match status" value="1"/>
</dbReference>
<dbReference type="Pfam" id="PF00831">
    <property type="entry name" value="Ribosomal_L29"/>
    <property type="match status" value="1"/>
</dbReference>
<dbReference type="SUPFAM" id="SSF46561">
    <property type="entry name" value="Ribosomal protein L29 (L29p)"/>
    <property type="match status" value="1"/>
</dbReference>
<accession>A6LEI3</accession>